<keyword id="KW-0488">Methylation</keyword>
<keyword id="KW-1185">Reference proteome</keyword>
<keyword id="KW-0687">Ribonucleoprotein</keyword>
<keyword id="KW-0689">Ribosomal protein</keyword>
<keyword id="KW-0694">RNA-binding</keyword>
<keyword id="KW-0699">rRNA-binding</keyword>
<keyword id="KW-0820">tRNA-binding</keyword>
<sequence>MPTINQLVRKGREKVKKKSKAPALEGNPQKRGVCVRVYTTTPKKPNSALRKVARVRLSNGYEVTCYIPGIGHNLQEHSIVLVRGGRVKDLPGVRYKIIRGALDAAGVKDRKQSRSKYGTKRPKEK</sequence>
<protein>
    <recommendedName>
        <fullName evidence="2">Small ribosomal subunit protein uS12</fullName>
    </recommendedName>
    <alternativeName>
        <fullName evidence="4">30S ribosomal protein S12</fullName>
    </alternativeName>
</protein>
<dbReference type="EMBL" id="CP001230">
    <property type="protein sequence ID" value="ACO03120.1"/>
    <property type="molecule type" value="Genomic_DNA"/>
</dbReference>
<dbReference type="RefSeq" id="WP_012675359.1">
    <property type="nucleotide sequence ID" value="NC_012440.1"/>
</dbReference>
<dbReference type="SMR" id="C0QQL8"/>
<dbReference type="STRING" id="123214.PERMA_1191"/>
<dbReference type="PaxDb" id="123214-PERMA_1191"/>
<dbReference type="KEGG" id="pmx:PERMA_1191"/>
<dbReference type="eggNOG" id="COG0048">
    <property type="taxonomic scope" value="Bacteria"/>
</dbReference>
<dbReference type="HOGENOM" id="CLU_104295_1_2_0"/>
<dbReference type="OrthoDB" id="9802366at2"/>
<dbReference type="Proteomes" id="UP000001366">
    <property type="component" value="Chromosome"/>
</dbReference>
<dbReference type="GO" id="GO:0015935">
    <property type="term" value="C:small ribosomal subunit"/>
    <property type="evidence" value="ECO:0007669"/>
    <property type="project" value="InterPro"/>
</dbReference>
<dbReference type="GO" id="GO:0019843">
    <property type="term" value="F:rRNA binding"/>
    <property type="evidence" value="ECO:0007669"/>
    <property type="project" value="UniProtKB-UniRule"/>
</dbReference>
<dbReference type="GO" id="GO:0003735">
    <property type="term" value="F:structural constituent of ribosome"/>
    <property type="evidence" value="ECO:0007669"/>
    <property type="project" value="InterPro"/>
</dbReference>
<dbReference type="GO" id="GO:0000049">
    <property type="term" value="F:tRNA binding"/>
    <property type="evidence" value="ECO:0007669"/>
    <property type="project" value="UniProtKB-UniRule"/>
</dbReference>
<dbReference type="GO" id="GO:0006412">
    <property type="term" value="P:translation"/>
    <property type="evidence" value="ECO:0007669"/>
    <property type="project" value="UniProtKB-UniRule"/>
</dbReference>
<dbReference type="CDD" id="cd03368">
    <property type="entry name" value="Ribosomal_S12"/>
    <property type="match status" value="1"/>
</dbReference>
<dbReference type="FunFam" id="2.40.50.140:FF:000001">
    <property type="entry name" value="30S ribosomal protein S12"/>
    <property type="match status" value="1"/>
</dbReference>
<dbReference type="Gene3D" id="2.40.50.140">
    <property type="entry name" value="Nucleic acid-binding proteins"/>
    <property type="match status" value="1"/>
</dbReference>
<dbReference type="HAMAP" id="MF_00403_B">
    <property type="entry name" value="Ribosomal_uS12_B"/>
    <property type="match status" value="1"/>
</dbReference>
<dbReference type="InterPro" id="IPR012340">
    <property type="entry name" value="NA-bd_OB-fold"/>
</dbReference>
<dbReference type="InterPro" id="IPR006032">
    <property type="entry name" value="Ribosomal_uS12"/>
</dbReference>
<dbReference type="InterPro" id="IPR005679">
    <property type="entry name" value="Ribosomal_uS12_bac"/>
</dbReference>
<dbReference type="NCBIfam" id="TIGR00981">
    <property type="entry name" value="rpsL_bact"/>
    <property type="match status" value="1"/>
</dbReference>
<dbReference type="PANTHER" id="PTHR11652">
    <property type="entry name" value="30S RIBOSOMAL PROTEIN S12 FAMILY MEMBER"/>
    <property type="match status" value="1"/>
</dbReference>
<dbReference type="Pfam" id="PF00164">
    <property type="entry name" value="Ribosom_S12_S23"/>
    <property type="match status" value="1"/>
</dbReference>
<dbReference type="PIRSF" id="PIRSF002133">
    <property type="entry name" value="Ribosomal_S12/S23"/>
    <property type="match status" value="1"/>
</dbReference>
<dbReference type="PRINTS" id="PR01034">
    <property type="entry name" value="RIBOSOMALS12"/>
</dbReference>
<dbReference type="SUPFAM" id="SSF50249">
    <property type="entry name" value="Nucleic acid-binding proteins"/>
    <property type="match status" value="1"/>
</dbReference>
<dbReference type="PROSITE" id="PS00055">
    <property type="entry name" value="RIBOSOMAL_S12"/>
    <property type="match status" value="1"/>
</dbReference>
<gene>
    <name evidence="2" type="primary">rpsL</name>
    <name type="ordered locus">PERMA_1191</name>
</gene>
<proteinExistence type="inferred from homology"/>
<feature type="chain" id="PRO_1000134648" description="Small ribosomal subunit protein uS12">
    <location>
        <begin position="1"/>
        <end position="125"/>
    </location>
</feature>
<feature type="region of interest" description="Disordered" evidence="3">
    <location>
        <begin position="1"/>
        <end position="28"/>
    </location>
</feature>
<feature type="region of interest" description="Disordered" evidence="3">
    <location>
        <begin position="104"/>
        <end position="125"/>
    </location>
</feature>
<feature type="compositionally biased region" description="Basic residues" evidence="3">
    <location>
        <begin position="9"/>
        <end position="20"/>
    </location>
</feature>
<feature type="compositionally biased region" description="Basic residues" evidence="3">
    <location>
        <begin position="113"/>
        <end position="125"/>
    </location>
</feature>
<feature type="modified residue" description="3-methylthioaspartic acid" evidence="1">
    <location>
        <position position="89"/>
    </location>
</feature>
<comment type="function">
    <text evidence="2">With S4 and S5 plays an important role in translational accuracy.</text>
</comment>
<comment type="function">
    <text evidence="2">Interacts with and stabilizes bases of the 16S rRNA that are involved in tRNA selection in the A site and with the mRNA backbone. Located at the interface of the 30S and 50S subunits, it traverses the body of the 30S subunit contacting proteins on the other side and probably holding the rRNA structure together. The combined cluster of proteins S8, S12 and S17 appears to hold together the shoulder and platform of the 30S subunit.</text>
</comment>
<comment type="subunit">
    <text evidence="2">Part of the 30S ribosomal subunit. Contacts proteins S8 and S17. May interact with IF1 in the 30S initiation complex.</text>
</comment>
<comment type="similarity">
    <text evidence="2">Belongs to the universal ribosomal protein uS12 family.</text>
</comment>
<name>RS12_PERMH</name>
<evidence type="ECO:0000250" key="1"/>
<evidence type="ECO:0000255" key="2">
    <source>
        <dbReference type="HAMAP-Rule" id="MF_00403"/>
    </source>
</evidence>
<evidence type="ECO:0000256" key="3">
    <source>
        <dbReference type="SAM" id="MobiDB-lite"/>
    </source>
</evidence>
<evidence type="ECO:0000305" key="4"/>
<organism>
    <name type="scientific">Persephonella marina (strain DSM 14350 / EX-H1)</name>
    <dbReference type="NCBI Taxonomy" id="123214"/>
    <lineage>
        <taxon>Bacteria</taxon>
        <taxon>Pseudomonadati</taxon>
        <taxon>Aquificota</taxon>
        <taxon>Aquificia</taxon>
        <taxon>Aquificales</taxon>
        <taxon>Hydrogenothermaceae</taxon>
        <taxon>Persephonella</taxon>
    </lineage>
</organism>
<reference key="1">
    <citation type="journal article" date="2009" name="J. Bacteriol.">
        <title>Complete and draft genome sequences of six members of the Aquificales.</title>
        <authorList>
            <person name="Reysenbach A.-L."/>
            <person name="Hamamura N."/>
            <person name="Podar M."/>
            <person name="Griffiths E."/>
            <person name="Ferreira S."/>
            <person name="Hochstein R."/>
            <person name="Heidelberg J."/>
            <person name="Johnson J."/>
            <person name="Mead D."/>
            <person name="Pohorille A."/>
            <person name="Sarmiento M."/>
            <person name="Schweighofer K."/>
            <person name="Seshadri R."/>
            <person name="Voytek M.A."/>
        </authorList>
    </citation>
    <scope>NUCLEOTIDE SEQUENCE [LARGE SCALE GENOMIC DNA]</scope>
    <source>
        <strain>DSM 14350 / EX-H1</strain>
    </source>
</reference>
<accession>C0QQL8</accession>